<organism>
    <name type="scientific">Oryza sativa subsp. japonica</name>
    <name type="common">Rice</name>
    <dbReference type="NCBI Taxonomy" id="39947"/>
    <lineage>
        <taxon>Eukaryota</taxon>
        <taxon>Viridiplantae</taxon>
        <taxon>Streptophyta</taxon>
        <taxon>Embryophyta</taxon>
        <taxon>Tracheophyta</taxon>
        <taxon>Spermatophyta</taxon>
        <taxon>Magnoliopsida</taxon>
        <taxon>Liliopsida</taxon>
        <taxon>Poales</taxon>
        <taxon>Poaceae</taxon>
        <taxon>BOP clade</taxon>
        <taxon>Oryzoideae</taxon>
        <taxon>Oryzeae</taxon>
        <taxon>Oryzinae</taxon>
        <taxon>Oryza</taxon>
        <taxon>Oryza sativa</taxon>
    </lineage>
</organism>
<protein>
    <recommendedName>
        <fullName>Tubulin beta-8 chain</fullName>
    </recommendedName>
    <alternativeName>
        <fullName>Beta-8-tubulin</fullName>
    </alternativeName>
</protein>
<evidence type="ECO:0000250" key="1">
    <source>
        <dbReference type="UniProtKB" id="P68363"/>
    </source>
</evidence>
<evidence type="ECO:0000250" key="2">
    <source>
        <dbReference type="UniProtKB" id="Q13509"/>
    </source>
</evidence>
<evidence type="ECO:0000256" key="3">
    <source>
        <dbReference type="SAM" id="MobiDB-lite"/>
    </source>
</evidence>
<evidence type="ECO:0000269" key="4">
    <source>
    </source>
</evidence>
<evidence type="ECO:0000305" key="5"/>
<comment type="function">
    <text>Tubulin is the major constituent of microtubules, a cylinder consisting of laterally associated linear protofilaments composed of alpha- and beta-tubulin heterodimers. Microtubules grow by the addition of GTP-tubulin dimers to the microtubule end, where a stabilizing cap forms. Below the cap, tubulin dimers are in GDP-bound state, owing to GTPase activity of alpha-tubulin.</text>
</comment>
<comment type="cofactor">
    <cofactor evidence="1">
        <name>Mg(2+)</name>
        <dbReference type="ChEBI" id="CHEBI:18420"/>
    </cofactor>
</comment>
<comment type="subunit">
    <text>Dimer of alpha and beta chains. A typical microtubule is a hollow water-filled tube with an outer diameter of 25 nm and an inner diameter of 15 nM. Alpha-beta heterodimers associate head-to-tail to form protofilaments running lengthwise along the microtubule wall with the beta-tubulin subunit facing the microtubule plus end conferring a structural polarity. Microtubules usually have 13 protofilaments but different protofilament numbers can be found in some organisms and specialized cells.</text>
</comment>
<comment type="subcellular location">
    <subcellularLocation>
        <location>Cytoplasm</location>
        <location>Cytoskeleton</location>
    </subcellularLocation>
</comment>
<comment type="tissue specificity">
    <text evidence="4">Expressed in anthers.</text>
</comment>
<comment type="induction">
    <text evidence="4">Down-regulated by abscisic acid (ABA).</text>
</comment>
<comment type="similarity">
    <text evidence="5">Belongs to the tubulin family.</text>
</comment>
<gene>
    <name type="primary">TUBB8</name>
    <name type="synonym">TUB8</name>
    <name type="ordered locus">Os03g0661300</name>
    <name type="ordered locus">LOC_Os03g45920</name>
    <name type="ORF">OSJNBa0034D21.30</name>
    <name type="ORF">OSJNBb0065L20.6</name>
</gene>
<accession>Q76FS2</accession>
<accession>Q10FN6</accession>
<proteinExistence type="evidence at transcript level"/>
<dbReference type="EMBL" id="AB104733">
    <property type="protein sequence ID" value="BAC82430.1"/>
    <property type="molecule type" value="mRNA"/>
</dbReference>
<dbReference type="EMBL" id="AC137991">
    <property type="protein sequence ID" value="AAS07314.1"/>
    <property type="molecule type" value="Genomic_DNA"/>
</dbReference>
<dbReference type="EMBL" id="AC139174">
    <property type="protein sequence ID" value="AAS07100.1"/>
    <property type="molecule type" value="Genomic_DNA"/>
</dbReference>
<dbReference type="EMBL" id="DP000009">
    <property type="protein sequence ID" value="ABF98021.1"/>
    <property type="molecule type" value="Genomic_DNA"/>
</dbReference>
<dbReference type="EMBL" id="AP008209">
    <property type="protein sequence ID" value="BAF12739.1"/>
    <property type="molecule type" value="Genomic_DNA"/>
</dbReference>
<dbReference type="EMBL" id="AP014959">
    <property type="protein sequence ID" value="BAS85602.1"/>
    <property type="molecule type" value="Genomic_DNA"/>
</dbReference>
<dbReference type="EMBL" id="AK121321">
    <property type="protein sequence ID" value="BAH00428.1"/>
    <property type="molecule type" value="mRNA"/>
</dbReference>
<dbReference type="RefSeq" id="XP_015632680.1">
    <property type="nucleotide sequence ID" value="XM_015777194.1"/>
</dbReference>
<dbReference type="SMR" id="Q76FS2"/>
<dbReference type="FunCoup" id="Q76FS2">
    <property type="interactions" value="1670"/>
</dbReference>
<dbReference type="STRING" id="39947.Q76FS2"/>
<dbReference type="PaxDb" id="39947-Q76FS2"/>
<dbReference type="EnsemblPlants" id="Os03t0661300-01">
    <property type="protein sequence ID" value="Os03t0661300-01"/>
    <property type="gene ID" value="Os03g0661300"/>
</dbReference>
<dbReference type="Gramene" id="Os03t0661300-01">
    <property type="protein sequence ID" value="Os03t0661300-01"/>
    <property type="gene ID" value="Os03g0661300"/>
</dbReference>
<dbReference type="KEGG" id="dosa:Os03g0661300"/>
<dbReference type="eggNOG" id="KOG1375">
    <property type="taxonomic scope" value="Eukaryota"/>
</dbReference>
<dbReference type="HOGENOM" id="CLU_015718_1_1_1"/>
<dbReference type="InParanoid" id="Q76FS2"/>
<dbReference type="OMA" id="MFFVEWI"/>
<dbReference type="OrthoDB" id="732292at2759"/>
<dbReference type="Proteomes" id="UP000000763">
    <property type="component" value="Chromosome 3"/>
</dbReference>
<dbReference type="Proteomes" id="UP000059680">
    <property type="component" value="Chromosome 3"/>
</dbReference>
<dbReference type="GO" id="GO:0005737">
    <property type="term" value="C:cytoplasm"/>
    <property type="evidence" value="ECO:0000318"/>
    <property type="project" value="GO_Central"/>
</dbReference>
<dbReference type="GO" id="GO:0005874">
    <property type="term" value="C:microtubule"/>
    <property type="evidence" value="ECO:0000318"/>
    <property type="project" value="GO_Central"/>
</dbReference>
<dbReference type="GO" id="GO:0005525">
    <property type="term" value="F:GTP binding"/>
    <property type="evidence" value="ECO:0000318"/>
    <property type="project" value="GO_Central"/>
</dbReference>
<dbReference type="GO" id="GO:0003924">
    <property type="term" value="F:GTPase activity"/>
    <property type="evidence" value="ECO:0007669"/>
    <property type="project" value="InterPro"/>
</dbReference>
<dbReference type="GO" id="GO:0046872">
    <property type="term" value="F:metal ion binding"/>
    <property type="evidence" value="ECO:0007669"/>
    <property type="project" value="UniProtKB-KW"/>
</dbReference>
<dbReference type="GO" id="GO:0005200">
    <property type="term" value="F:structural constituent of cytoskeleton"/>
    <property type="evidence" value="ECO:0000318"/>
    <property type="project" value="GO_Central"/>
</dbReference>
<dbReference type="GO" id="GO:0000226">
    <property type="term" value="P:microtubule cytoskeleton organization"/>
    <property type="evidence" value="ECO:0000318"/>
    <property type="project" value="GO_Central"/>
</dbReference>
<dbReference type="GO" id="GO:0000278">
    <property type="term" value="P:mitotic cell cycle"/>
    <property type="evidence" value="ECO:0000318"/>
    <property type="project" value="GO_Central"/>
</dbReference>
<dbReference type="CDD" id="cd02187">
    <property type="entry name" value="beta_tubulin"/>
    <property type="match status" value="1"/>
</dbReference>
<dbReference type="FunFam" id="1.10.287.600:FF:000002">
    <property type="entry name" value="Tubulin beta chain"/>
    <property type="match status" value="1"/>
</dbReference>
<dbReference type="FunFam" id="3.30.1330.20:FF:000002">
    <property type="entry name" value="Tubulin beta chain"/>
    <property type="match status" value="1"/>
</dbReference>
<dbReference type="FunFam" id="3.40.50.1440:FF:000005">
    <property type="entry name" value="Tubulin beta chain"/>
    <property type="match status" value="1"/>
</dbReference>
<dbReference type="Gene3D" id="1.10.287.600">
    <property type="entry name" value="Helix hairpin bin"/>
    <property type="match status" value="1"/>
</dbReference>
<dbReference type="Gene3D" id="3.30.1330.20">
    <property type="entry name" value="Tubulin/FtsZ, C-terminal domain"/>
    <property type="match status" value="1"/>
</dbReference>
<dbReference type="Gene3D" id="3.40.50.1440">
    <property type="entry name" value="Tubulin/FtsZ, GTPase domain"/>
    <property type="match status" value="1"/>
</dbReference>
<dbReference type="InterPro" id="IPR013838">
    <property type="entry name" value="Beta-tubulin_BS"/>
</dbReference>
<dbReference type="InterPro" id="IPR002453">
    <property type="entry name" value="Beta_tubulin"/>
</dbReference>
<dbReference type="InterPro" id="IPR008280">
    <property type="entry name" value="Tub_FtsZ_C"/>
</dbReference>
<dbReference type="InterPro" id="IPR000217">
    <property type="entry name" value="Tubulin"/>
</dbReference>
<dbReference type="InterPro" id="IPR037103">
    <property type="entry name" value="Tubulin/FtsZ-like_C"/>
</dbReference>
<dbReference type="InterPro" id="IPR018316">
    <property type="entry name" value="Tubulin/FtsZ_2-layer-sand-dom"/>
</dbReference>
<dbReference type="InterPro" id="IPR036525">
    <property type="entry name" value="Tubulin/FtsZ_GTPase_sf"/>
</dbReference>
<dbReference type="InterPro" id="IPR023123">
    <property type="entry name" value="Tubulin_C"/>
</dbReference>
<dbReference type="InterPro" id="IPR017975">
    <property type="entry name" value="Tubulin_CS"/>
</dbReference>
<dbReference type="InterPro" id="IPR003008">
    <property type="entry name" value="Tubulin_FtsZ_GTPase"/>
</dbReference>
<dbReference type="PANTHER" id="PTHR11588">
    <property type="entry name" value="TUBULIN"/>
    <property type="match status" value="1"/>
</dbReference>
<dbReference type="Pfam" id="PF00091">
    <property type="entry name" value="Tubulin"/>
    <property type="match status" value="1"/>
</dbReference>
<dbReference type="Pfam" id="PF03953">
    <property type="entry name" value="Tubulin_C"/>
    <property type="match status" value="1"/>
</dbReference>
<dbReference type="PRINTS" id="PR01163">
    <property type="entry name" value="BETATUBULIN"/>
</dbReference>
<dbReference type="PRINTS" id="PR01161">
    <property type="entry name" value="TUBULIN"/>
</dbReference>
<dbReference type="SMART" id="SM00864">
    <property type="entry name" value="Tubulin"/>
    <property type="match status" value="1"/>
</dbReference>
<dbReference type="SMART" id="SM00865">
    <property type="entry name" value="Tubulin_C"/>
    <property type="match status" value="1"/>
</dbReference>
<dbReference type="SUPFAM" id="SSF55307">
    <property type="entry name" value="Tubulin C-terminal domain-like"/>
    <property type="match status" value="1"/>
</dbReference>
<dbReference type="SUPFAM" id="SSF52490">
    <property type="entry name" value="Tubulin nucleotide-binding domain-like"/>
    <property type="match status" value="1"/>
</dbReference>
<dbReference type="PROSITE" id="PS00227">
    <property type="entry name" value="TUBULIN"/>
    <property type="match status" value="1"/>
</dbReference>
<dbReference type="PROSITE" id="PS00228">
    <property type="entry name" value="TUBULIN_B_AUTOREG"/>
    <property type="match status" value="1"/>
</dbReference>
<name>TBB8_ORYSJ</name>
<keyword id="KW-0963">Cytoplasm</keyword>
<keyword id="KW-0206">Cytoskeleton</keyword>
<keyword id="KW-0342">GTP-binding</keyword>
<keyword id="KW-0460">Magnesium</keyword>
<keyword id="KW-0479">Metal-binding</keyword>
<keyword id="KW-0493">Microtubule</keyword>
<keyword id="KW-0547">Nucleotide-binding</keyword>
<keyword id="KW-1185">Reference proteome</keyword>
<feature type="chain" id="PRO_0000048370" description="Tubulin beta-8 chain">
    <location>
        <begin position="1"/>
        <end position="446"/>
    </location>
</feature>
<feature type="region of interest" description="Disordered" evidence="3">
    <location>
        <begin position="426"/>
        <end position="446"/>
    </location>
</feature>
<feature type="compositionally biased region" description="Acidic residues" evidence="3">
    <location>
        <begin position="429"/>
        <end position="446"/>
    </location>
</feature>
<feature type="binding site" evidence="2">
    <location>
        <position position="11"/>
    </location>
    <ligand>
        <name>GTP</name>
        <dbReference type="ChEBI" id="CHEBI:37565"/>
    </ligand>
</feature>
<feature type="binding site" evidence="1">
    <location>
        <position position="69"/>
    </location>
    <ligand>
        <name>GTP</name>
        <dbReference type="ChEBI" id="CHEBI:37565"/>
    </ligand>
</feature>
<feature type="binding site" evidence="1">
    <location>
        <position position="69"/>
    </location>
    <ligand>
        <name>Mg(2+)</name>
        <dbReference type="ChEBI" id="CHEBI:18420"/>
    </ligand>
</feature>
<feature type="binding site" evidence="2">
    <location>
        <position position="138"/>
    </location>
    <ligand>
        <name>GTP</name>
        <dbReference type="ChEBI" id="CHEBI:37565"/>
    </ligand>
</feature>
<feature type="binding site" evidence="2">
    <location>
        <position position="142"/>
    </location>
    <ligand>
        <name>GTP</name>
        <dbReference type="ChEBI" id="CHEBI:37565"/>
    </ligand>
</feature>
<feature type="binding site" evidence="2">
    <location>
        <position position="143"/>
    </location>
    <ligand>
        <name>GTP</name>
        <dbReference type="ChEBI" id="CHEBI:37565"/>
    </ligand>
</feature>
<feature type="binding site" evidence="2">
    <location>
        <position position="144"/>
    </location>
    <ligand>
        <name>GTP</name>
        <dbReference type="ChEBI" id="CHEBI:37565"/>
    </ligand>
</feature>
<feature type="binding site" evidence="2">
    <location>
        <position position="204"/>
    </location>
    <ligand>
        <name>GTP</name>
        <dbReference type="ChEBI" id="CHEBI:37565"/>
    </ligand>
</feature>
<feature type="binding site" evidence="2">
    <location>
        <position position="226"/>
    </location>
    <ligand>
        <name>GTP</name>
        <dbReference type="ChEBI" id="CHEBI:37565"/>
    </ligand>
</feature>
<sequence length="446" mass="49634">MREILHIQGGQCGNQIGAKFWEVICGEHGVDPTGTYTGTSPQQLERINVYFNEASGGRHVPRAVLMDLEPGTMDSLRSGPIGGIFRPDNFVFGQSGAGNNWAKGHYTEGAELIDSVLDVVRKEAENCDCLQGFQVCHSLGGGTGSGMGTLLISKIREEYPDRMMLTFSVFPSPKVSDTVVEPYNATLSVHQLVENADECMVLDNEALYDICFRTLKLTNPSFGDLNHLISATMSGVTCCLRFPGQLNSDLRKLAVNLIPFPRLHFFMVGFAPLTSRGSQQYRALTVPELTQQMWDAKNMMCAADPRHGRYLTASAMFRGRMSTKEVDEQMINVQNKNSSYFVEWIPNNVKSSVCDIPPVGLSMASTFVGNSTSIQEMFRRVSEQFTAMFRRKAFLHWYTSEGMDEMEFTEAESNMNDLVAEYQQYQDATAEDDYDEDDDAAAADEA</sequence>
<reference key="1">
    <citation type="journal article" date="2003" name="Plant Cell Physiol.">
        <title>Expression analyses of beta-tubulin isotype genes in rice.</title>
        <authorList>
            <person name="Yoshikawa M."/>
            <person name="Yang G."/>
            <person name="Kawaguchi K."/>
            <person name="Komatsu S."/>
        </authorList>
    </citation>
    <scope>NUCLEOTIDE SEQUENCE [MRNA]</scope>
    <scope>TISSUE SPECIFICITY</scope>
    <scope>INDUCTION</scope>
    <scope>NOMENCLATURE</scope>
    <source>
        <strain>cv. Nipponbare</strain>
    </source>
</reference>
<reference key="2">
    <citation type="journal article" date="2005" name="Genome Res.">
        <title>Sequence, annotation, and analysis of synteny between rice chromosome 3 and diverged grass species.</title>
        <authorList>
            <consortium name="The rice chromosome 3 sequencing consortium"/>
            <person name="Buell C.R."/>
            <person name="Yuan Q."/>
            <person name="Ouyang S."/>
            <person name="Liu J."/>
            <person name="Zhu W."/>
            <person name="Wang A."/>
            <person name="Maiti R."/>
            <person name="Haas B."/>
            <person name="Wortman J."/>
            <person name="Pertea M."/>
            <person name="Jones K.M."/>
            <person name="Kim M."/>
            <person name="Overton L."/>
            <person name="Tsitrin T."/>
            <person name="Fadrosh D."/>
            <person name="Bera J."/>
            <person name="Weaver B."/>
            <person name="Jin S."/>
            <person name="Johri S."/>
            <person name="Reardon M."/>
            <person name="Webb K."/>
            <person name="Hill J."/>
            <person name="Moffat K."/>
            <person name="Tallon L."/>
            <person name="Van Aken S."/>
            <person name="Lewis M."/>
            <person name="Utterback T."/>
            <person name="Feldblyum T."/>
            <person name="Zismann V."/>
            <person name="Iobst S."/>
            <person name="Hsiao J."/>
            <person name="de Vazeille A.R."/>
            <person name="Salzberg S.L."/>
            <person name="White O."/>
            <person name="Fraser C.M."/>
            <person name="Yu Y."/>
            <person name="Kim H."/>
            <person name="Rambo T."/>
            <person name="Currie J."/>
            <person name="Collura K."/>
            <person name="Kernodle-Thompson S."/>
            <person name="Wei F."/>
            <person name="Kudrna K."/>
            <person name="Ammiraju J.S.S."/>
            <person name="Luo M."/>
            <person name="Goicoechea J.L."/>
            <person name="Wing R.A."/>
            <person name="Henry D."/>
            <person name="Oates R."/>
            <person name="Palmer M."/>
            <person name="Pries G."/>
            <person name="Saski C."/>
            <person name="Simmons J."/>
            <person name="Soderlund C."/>
            <person name="Nelson W."/>
            <person name="de la Bastide M."/>
            <person name="Spiegel L."/>
            <person name="Nascimento L."/>
            <person name="Huang E."/>
            <person name="Preston R."/>
            <person name="Zutavern T."/>
            <person name="Palmer L."/>
            <person name="O'Shaughnessy A."/>
            <person name="Dike S."/>
            <person name="McCombie W.R."/>
            <person name="Minx P."/>
            <person name="Cordum H."/>
            <person name="Wilson R."/>
            <person name="Jin W."/>
            <person name="Lee H.R."/>
            <person name="Jiang J."/>
            <person name="Jackson S."/>
        </authorList>
    </citation>
    <scope>NUCLEOTIDE SEQUENCE [LARGE SCALE GENOMIC DNA]</scope>
    <source>
        <strain>cv. Nipponbare</strain>
    </source>
</reference>
<reference key="3">
    <citation type="journal article" date="2005" name="Nature">
        <title>The map-based sequence of the rice genome.</title>
        <authorList>
            <consortium name="International rice genome sequencing project (IRGSP)"/>
        </authorList>
    </citation>
    <scope>NUCLEOTIDE SEQUENCE [LARGE SCALE GENOMIC DNA]</scope>
    <source>
        <strain>cv. Nipponbare</strain>
    </source>
</reference>
<reference key="4">
    <citation type="journal article" date="2008" name="Nucleic Acids Res.">
        <title>The rice annotation project database (RAP-DB): 2008 update.</title>
        <authorList>
            <consortium name="The rice annotation project (RAP)"/>
        </authorList>
    </citation>
    <scope>GENOME REANNOTATION</scope>
    <source>
        <strain>cv. Nipponbare</strain>
    </source>
</reference>
<reference key="5">
    <citation type="journal article" date="2013" name="Rice">
        <title>Improvement of the Oryza sativa Nipponbare reference genome using next generation sequence and optical map data.</title>
        <authorList>
            <person name="Kawahara Y."/>
            <person name="de la Bastide M."/>
            <person name="Hamilton J.P."/>
            <person name="Kanamori H."/>
            <person name="McCombie W.R."/>
            <person name="Ouyang S."/>
            <person name="Schwartz D.C."/>
            <person name="Tanaka T."/>
            <person name="Wu J."/>
            <person name="Zhou S."/>
            <person name="Childs K.L."/>
            <person name="Davidson R.M."/>
            <person name="Lin H."/>
            <person name="Quesada-Ocampo L."/>
            <person name="Vaillancourt B."/>
            <person name="Sakai H."/>
            <person name="Lee S.S."/>
            <person name="Kim J."/>
            <person name="Numa H."/>
            <person name="Itoh T."/>
            <person name="Buell C.R."/>
            <person name="Matsumoto T."/>
        </authorList>
    </citation>
    <scope>GENOME REANNOTATION</scope>
    <source>
        <strain>cv. Nipponbare</strain>
    </source>
</reference>
<reference key="6">
    <citation type="journal article" date="2003" name="Science">
        <title>Collection, mapping, and annotation of over 28,000 cDNA clones from japonica rice.</title>
        <authorList>
            <consortium name="The rice full-length cDNA consortium"/>
        </authorList>
    </citation>
    <scope>NUCLEOTIDE SEQUENCE [LARGE SCALE MRNA]</scope>
    <source>
        <strain>cv. Nipponbare</strain>
    </source>
</reference>